<accession>Q43175</accession>
<feature type="transit peptide" description="Mitochondrion" evidence="2">
    <location>
        <begin position="1"/>
        <end status="unknown"/>
    </location>
</feature>
<feature type="chain" id="PRO_0000005489" description="Citrate synthase, mitochondrial">
    <location>
        <begin status="unknown"/>
        <end position="471"/>
    </location>
</feature>
<feature type="active site" evidence="3">
    <location>
        <position position="309"/>
    </location>
</feature>
<feature type="active site" evidence="3">
    <location>
        <position position="355"/>
    </location>
</feature>
<feature type="active site" evidence="3">
    <location>
        <position position="409"/>
    </location>
</feature>
<dbReference type="EC" id="2.3.3.16"/>
<dbReference type="EMBL" id="X75082">
    <property type="protein sequence ID" value="CAA52976.1"/>
    <property type="molecule type" value="mRNA"/>
</dbReference>
<dbReference type="PIR" id="S44316">
    <property type="entry name" value="S44316"/>
</dbReference>
<dbReference type="RefSeq" id="NP_001305561.1">
    <property type="nucleotide sequence ID" value="NM_001318632.1"/>
</dbReference>
<dbReference type="SMR" id="Q43175"/>
<dbReference type="FunCoup" id="Q43175">
    <property type="interactions" value="2915"/>
</dbReference>
<dbReference type="STRING" id="4113.Q43175"/>
<dbReference type="PaxDb" id="4113-PGSC0003DMT400074559"/>
<dbReference type="GeneID" id="102595372"/>
<dbReference type="KEGG" id="sot:102595372"/>
<dbReference type="eggNOG" id="KOG2617">
    <property type="taxonomic scope" value="Eukaryota"/>
</dbReference>
<dbReference type="InParanoid" id="Q43175"/>
<dbReference type="OrthoDB" id="8017587at2759"/>
<dbReference type="UniPathway" id="UPA00223">
    <property type="reaction ID" value="UER00717"/>
</dbReference>
<dbReference type="Proteomes" id="UP000011115">
    <property type="component" value="Unassembled WGS sequence"/>
</dbReference>
<dbReference type="ExpressionAtlas" id="Q43175">
    <property type="expression patterns" value="baseline and differential"/>
</dbReference>
<dbReference type="GO" id="GO:0005759">
    <property type="term" value="C:mitochondrial matrix"/>
    <property type="evidence" value="ECO:0000318"/>
    <property type="project" value="GO_Central"/>
</dbReference>
<dbReference type="GO" id="GO:0004108">
    <property type="term" value="F:citrate (Si)-synthase activity"/>
    <property type="evidence" value="ECO:0000318"/>
    <property type="project" value="GO_Central"/>
</dbReference>
<dbReference type="GO" id="GO:0005975">
    <property type="term" value="P:carbohydrate metabolic process"/>
    <property type="evidence" value="ECO:0000318"/>
    <property type="project" value="GO_Central"/>
</dbReference>
<dbReference type="GO" id="GO:0006101">
    <property type="term" value="P:citrate metabolic process"/>
    <property type="evidence" value="ECO:0007669"/>
    <property type="project" value="InterPro"/>
</dbReference>
<dbReference type="GO" id="GO:0006099">
    <property type="term" value="P:tricarboxylic acid cycle"/>
    <property type="evidence" value="ECO:0000318"/>
    <property type="project" value="GO_Central"/>
</dbReference>
<dbReference type="FunFam" id="1.10.230.10:FF:000001">
    <property type="entry name" value="Citrate synthase"/>
    <property type="match status" value="1"/>
</dbReference>
<dbReference type="FunFam" id="1.10.580.10:FF:000001">
    <property type="entry name" value="Citrate synthase"/>
    <property type="match status" value="1"/>
</dbReference>
<dbReference type="Gene3D" id="1.10.580.10">
    <property type="entry name" value="Citrate Synthase, domain 1"/>
    <property type="match status" value="1"/>
</dbReference>
<dbReference type="Gene3D" id="1.10.230.10">
    <property type="entry name" value="Cytochrome P450-Terp, domain 2"/>
    <property type="match status" value="1"/>
</dbReference>
<dbReference type="InterPro" id="IPR016142">
    <property type="entry name" value="Citrate_synth-like_lrg_a-sub"/>
</dbReference>
<dbReference type="InterPro" id="IPR016143">
    <property type="entry name" value="Citrate_synth-like_sm_a-sub"/>
</dbReference>
<dbReference type="InterPro" id="IPR002020">
    <property type="entry name" value="Citrate_synthase"/>
</dbReference>
<dbReference type="InterPro" id="IPR019810">
    <property type="entry name" value="Citrate_synthase_AS"/>
</dbReference>
<dbReference type="InterPro" id="IPR010109">
    <property type="entry name" value="Citrate_synthase_euk"/>
</dbReference>
<dbReference type="InterPro" id="IPR036969">
    <property type="entry name" value="Citrate_synthase_sf"/>
</dbReference>
<dbReference type="NCBIfam" id="TIGR01793">
    <property type="entry name" value="cit_synth_euk"/>
    <property type="match status" value="1"/>
</dbReference>
<dbReference type="NCBIfam" id="NF007128">
    <property type="entry name" value="PRK09569.1"/>
    <property type="match status" value="1"/>
</dbReference>
<dbReference type="PANTHER" id="PTHR11739">
    <property type="entry name" value="CITRATE SYNTHASE"/>
    <property type="match status" value="1"/>
</dbReference>
<dbReference type="PANTHER" id="PTHR11739:SF8">
    <property type="entry name" value="CITRATE SYNTHASE, MITOCHONDRIAL"/>
    <property type="match status" value="1"/>
</dbReference>
<dbReference type="Pfam" id="PF00285">
    <property type="entry name" value="Citrate_synt"/>
    <property type="match status" value="1"/>
</dbReference>
<dbReference type="PRINTS" id="PR00143">
    <property type="entry name" value="CITRTSNTHASE"/>
</dbReference>
<dbReference type="SUPFAM" id="SSF48256">
    <property type="entry name" value="Citrate synthase"/>
    <property type="match status" value="1"/>
</dbReference>
<dbReference type="PROSITE" id="PS00480">
    <property type="entry name" value="CITRATE_SYNTHASE"/>
    <property type="match status" value="1"/>
</dbReference>
<organism>
    <name type="scientific">Solanum tuberosum</name>
    <name type="common">Potato</name>
    <dbReference type="NCBI Taxonomy" id="4113"/>
    <lineage>
        <taxon>Eukaryota</taxon>
        <taxon>Viridiplantae</taxon>
        <taxon>Streptophyta</taxon>
        <taxon>Embryophyta</taxon>
        <taxon>Tracheophyta</taxon>
        <taxon>Spermatophyta</taxon>
        <taxon>Magnoliopsida</taxon>
        <taxon>eudicotyledons</taxon>
        <taxon>Gunneridae</taxon>
        <taxon>Pentapetalae</taxon>
        <taxon>asterids</taxon>
        <taxon>lamiids</taxon>
        <taxon>Solanales</taxon>
        <taxon>Solanaceae</taxon>
        <taxon>Solanoideae</taxon>
        <taxon>Solaneae</taxon>
        <taxon>Solanum</taxon>
    </lineage>
</organism>
<name>CISY_SOLTU</name>
<reference key="1">
    <citation type="journal article" date="1995" name="Planta">
        <title>Mitochondrial citrate synthase from potato: predominant expression in mature leaves and young flower buds.</title>
        <authorList>
            <person name="Landschuetze V."/>
            <person name="Willmitzer L."/>
            <person name="Mueller-Roeber B."/>
        </authorList>
    </citation>
    <scope>NUCLEOTIDE SEQUENCE [MRNA]</scope>
    <source>
        <strain>cv. Desiree</strain>
    </source>
</reference>
<sequence length="471" mass="52612">MVFYRSVSLLSKLRSRAVQQSNVSNSVRWLQVQTSSGLDLRSELVQELIPEQQDRLKKIKSDMKGSIGNITVDMVLGGMRGMTGLLWKPHYLDPDEGIRFRGLSIPECQKVLPAAKPGGEPLPEGLLWLLLTGKVPSKEQVNSIVSGIAESGIISLIIMYTTIDALPVTAHPMTQFATGVMALQVQSEFQKAYEKGIHKSKYWEPTYEDSMNLIAQVPLVAAYVYRRMYKNGDTIPKDESLDYGANFAHMLGFSSSEMHELLMRLYVTIHSDHEGGNVSAHTGHLVASALSDPYLSFAAALNGLAGPLHGLANQEVLLWIKSVVEECGENISKEQLKDYVWKTLNSGKVVPGFGHGVLRKTVPRYTCQREFAMKHLPEDPLFQLVSKLYEVFLLFLQNLAKLKPWPNVDAHSGVLLNYYGLTEARYYTVLFGVSRALGICSQLIWDRALGLPLERPKSVTMEWLENQCKKA</sequence>
<protein>
    <recommendedName>
        <fullName>Citrate synthase, mitochondrial</fullName>
        <ecNumber>2.3.3.16</ecNumber>
    </recommendedName>
</protein>
<proteinExistence type="evidence at transcript level"/>
<evidence type="ECO:0000250" key="1"/>
<evidence type="ECO:0000255" key="2"/>
<evidence type="ECO:0000255" key="3">
    <source>
        <dbReference type="PROSITE-ProRule" id="PRU10117"/>
    </source>
</evidence>
<evidence type="ECO:0000305" key="4"/>
<comment type="catalytic activity">
    <reaction evidence="3">
        <text>oxaloacetate + acetyl-CoA + H2O = citrate + CoA + H(+)</text>
        <dbReference type="Rhea" id="RHEA:16845"/>
        <dbReference type="ChEBI" id="CHEBI:15377"/>
        <dbReference type="ChEBI" id="CHEBI:15378"/>
        <dbReference type="ChEBI" id="CHEBI:16452"/>
        <dbReference type="ChEBI" id="CHEBI:16947"/>
        <dbReference type="ChEBI" id="CHEBI:57287"/>
        <dbReference type="ChEBI" id="CHEBI:57288"/>
        <dbReference type="EC" id="2.3.3.16"/>
    </reaction>
</comment>
<comment type="pathway">
    <text>Carbohydrate metabolism; tricarboxylic acid cycle; isocitrate from oxaloacetate: step 1/2.</text>
</comment>
<comment type="subunit">
    <text evidence="1">Homodimer.</text>
</comment>
<comment type="subcellular location">
    <subcellularLocation>
        <location>Mitochondrion matrix</location>
    </subcellularLocation>
</comment>
<comment type="tissue specificity">
    <text>Ubiquitous.</text>
</comment>
<comment type="miscellaneous">
    <text>Citrate synthase is found in nearly all cells capable of oxidative metabolism.</text>
</comment>
<comment type="similarity">
    <text evidence="4">Belongs to the citrate synthase family.</text>
</comment>
<keyword id="KW-0496">Mitochondrion</keyword>
<keyword id="KW-1185">Reference proteome</keyword>
<keyword id="KW-0808">Transferase</keyword>
<keyword id="KW-0809">Transit peptide</keyword>
<keyword id="KW-0816">Tricarboxylic acid cycle</keyword>